<gene>
    <name evidence="1" type="primary">engB</name>
    <name type="ordered locus">VFMJ11_0073</name>
</gene>
<name>ENGB_ALIFM</name>
<organism>
    <name type="scientific">Aliivibrio fischeri (strain MJ11)</name>
    <name type="common">Vibrio fischeri</name>
    <dbReference type="NCBI Taxonomy" id="388396"/>
    <lineage>
        <taxon>Bacteria</taxon>
        <taxon>Pseudomonadati</taxon>
        <taxon>Pseudomonadota</taxon>
        <taxon>Gammaproteobacteria</taxon>
        <taxon>Vibrionales</taxon>
        <taxon>Vibrionaceae</taxon>
        <taxon>Aliivibrio</taxon>
    </lineage>
</organism>
<evidence type="ECO:0000255" key="1">
    <source>
        <dbReference type="HAMAP-Rule" id="MF_00321"/>
    </source>
</evidence>
<reference key="1">
    <citation type="submission" date="2008-08" db="EMBL/GenBank/DDBJ databases">
        <title>Complete sequence of Vibrio fischeri strain MJ11.</title>
        <authorList>
            <person name="Mandel M.J."/>
            <person name="Stabb E.V."/>
            <person name="Ruby E.G."/>
            <person name="Ferriera S."/>
            <person name="Johnson J."/>
            <person name="Kravitz S."/>
            <person name="Beeson K."/>
            <person name="Sutton G."/>
            <person name="Rogers Y.-H."/>
            <person name="Friedman R."/>
            <person name="Frazier M."/>
            <person name="Venter J.C."/>
        </authorList>
    </citation>
    <scope>NUCLEOTIDE SEQUENCE [LARGE SCALE GENOMIC DNA]</scope>
    <source>
        <strain>MJ11</strain>
    </source>
</reference>
<feature type="chain" id="PRO_1000116014" description="Probable GTP-binding protein EngB">
    <location>
        <begin position="1"/>
        <end position="215"/>
    </location>
</feature>
<feature type="domain" description="EngB-type G" evidence="1">
    <location>
        <begin position="26"/>
        <end position="200"/>
    </location>
</feature>
<feature type="binding site" evidence="1">
    <location>
        <begin position="34"/>
        <end position="41"/>
    </location>
    <ligand>
        <name>GTP</name>
        <dbReference type="ChEBI" id="CHEBI:37565"/>
    </ligand>
</feature>
<feature type="binding site" evidence="1">
    <location>
        <position position="41"/>
    </location>
    <ligand>
        <name>Mg(2+)</name>
        <dbReference type="ChEBI" id="CHEBI:18420"/>
    </ligand>
</feature>
<feature type="binding site" evidence="1">
    <location>
        <begin position="61"/>
        <end position="65"/>
    </location>
    <ligand>
        <name>GTP</name>
        <dbReference type="ChEBI" id="CHEBI:37565"/>
    </ligand>
</feature>
<feature type="binding site" evidence="1">
    <location>
        <position position="63"/>
    </location>
    <ligand>
        <name>Mg(2+)</name>
        <dbReference type="ChEBI" id="CHEBI:18420"/>
    </ligand>
</feature>
<feature type="binding site" evidence="1">
    <location>
        <begin position="79"/>
        <end position="82"/>
    </location>
    <ligand>
        <name>GTP</name>
        <dbReference type="ChEBI" id="CHEBI:37565"/>
    </ligand>
</feature>
<feature type="binding site" evidence="1">
    <location>
        <begin position="146"/>
        <end position="149"/>
    </location>
    <ligand>
        <name>GTP</name>
        <dbReference type="ChEBI" id="CHEBI:37565"/>
    </ligand>
</feature>
<feature type="binding site" evidence="1">
    <location>
        <begin position="179"/>
        <end position="181"/>
    </location>
    <ligand>
        <name>GTP</name>
        <dbReference type="ChEBI" id="CHEBI:37565"/>
    </ligand>
</feature>
<dbReference type="EMBL" id="CP001139">
    <property type="protein sequence ID" value="ACH64879.1"/>
    <property type="molecule type" value="Genomic_DNA"/>
</dbReference>
<dbReference type="RefSeq" id="WP_012532680.1">
    <property type="nucleotide sequence ID" value="NC_011184.1"/>
</dbReference>
<dbReference type="SMR" id="B5FFA6"/>
<dbReference type="KEGG" id="vfm:VFMJ11_0073"/>
<dbReference type="HOGENOM" id="CLU_033732_1_2_6"/>
<dbReference type="Proteomes" id="UP000001857">
    <property type="component" value="Chromosome I"/>
</dbReference>
<dbReference type="GO" id="GO:0005829">
    <property type="term" value="C:cytosol"/>
    <property type="evidence" value="ECO:0007669"/>
    <property type="project" value="TreeGrafter"/>
</dbReference>
<dbReference type="GO" id="GO:0005525">
    <property type="term" value="F:GTP binding"/>
    <property type="evidence" value="ECO:0007669"/>
    <property type="project" value="UniProtKB-UniRule"/>
</dbReference>
<dbReference type="GO" id="GO:0046872">
    <property type="term" value="F:metal ion binding"/>
    <property type="evidence" value="ECO:0007669"/>
    <property type="project" value="UniProtKB-KW"/>
</dbReference>
<dbReference type="GO" id="GO:0000917">
    <property type="term" value="P:division septum assembly"/>
    <property type="evidence" value="ECO:0007669"/>
    <property type="project" value="UniProtKB-KW"/>
</dbReference>
<dbReference type="CDD" id="cd01876">
    <property type="entry name" value="YihA_EngB"/>
    <property type="match status" value="1"/>
</dbReference>
<dbReference type="FunFam" id="3.40.50.300:FF:000098">
    <property type="entry name" value="Probable GTP-binding protein EngB"/>
    <property type="match status" value="1"/>
</dbReference>
<dbReference type="Gene3D" id="3.40.50.300">
    <property type="entry name" value="P-loop containing nucleotide triphosphate hydrolases"/>
    <property type="match status" value="1"/>
</dbReference>
<dbReference type="HAMAP" id="MF_00321">
    <property type="entry name" value="GTPase_EngB"/>
    <property type="match status" value="1"/>
</dbReference>
<dbReference type="InterPro" id="IPR030393">
    <property type="entry name" value="G_ENGB_dom"/>
</dbReference>
<dbReference type="InterPro" id="IPR006073">
    <property type="entry name" value="GTP-bd"/>
</dbReference>
<dbReference type="InterPro" id="IPR019987">
    <property type="entry name" value="GTP-bd_ribosome_bio_YsxC"/>
</dbReference>
<dbReference type="InterPro" id="IPR027417">
    <property type="entry name" value="P-loop_NTPase"/>
</dbReference>
<dbReference type="NCBIfam" id="TIGR03598">
    <property type="entry name" value="GTPase_YsxC"/>
    <property type="match status" value="1"/>
</dbReference>
<dbReference type="PANTHER" id="PTHR11649:SF13">
    <property type="entry name" value="ENGB-TYPE G DOMAIN-CONTAINING PROTEIN"/>
    <property type="match status" value="1"/>
</dbReference>
<dbReference type="PANTHER" id="PTHR11649">
    <property type="entry name" value="MSS1/TRME-RELATED GTP-BINDING PROTEIN"/>
    <property type="match status" value="1"/>
</dbReference>
<dbReference type="Pfam" id="PF01926">
    <property type="entry name" value="MMR_HSR1"/>
    <property type="match status" value="1"/>
</dbReference>
<dbReference type="SUPFAM" id="SSF52540">
    <property type="entry name" value="P-loop containing nucleoside triphosphate hydrolases"/>
    <property type="match status" value="1"/>
</dbReference>
<dbReference type="PROSITE" id="PS51706">
    <property type="entry name" value="G_ENGB"/>
    <property type="match status" value="1"/>
</dbReference>
<accession>B5FFA6</accession>
<protein>
    <recommendedName>
        <fullName evidence="1">Probable GTP-binding protein EngB</fullName>
    </recommendedName>
</protein>
<sequence length="215" mass="24203">MSKTIHYQKTHFITSAPDIRHLPEDEGIEVAFAGRSNAGKSSALNRLTNQKSLAKTSKTPGRTQLINLFKVEENCHIVDLPGYGFAQVPLEMKKKWQKSLGEYLQKRQCLQGLVVLMDIRHPLKDIDQQLVFWAVDQNIPVQILLTKADKLKSGARKAQVLKVREAAVDFGGEVEVDAFSSLKGIGVDKLRAKLDEWFAPAFELDDEFIEDLDVE</sequence>
<comment type="function">
    <text evidence="1">Necessary for normal cell division and for the maintenance of normal septation.</text>
</comment>
<comment type="cofactor">
    <cofactor evidence="1">
        <name>Mg(2+)</name>
        <dbReference type="ChEBI" id="CHEBI:18420"/>
    </cofactor>
</comment>
<comment type="similarity">
    <text evidence="1">Belongs to the TRAFAC class TrmE-Era-EngA-EngB-Septin-like GTPase superfamily. EngB GTPase family.</text>
</comment>
<proteinExistence type="inferred from homology"/>
<keyword id="KW-0131">Cell cycle</keyword>
<keyword id="KW-0132">Cell division</keyword>
<keyword id="KW-0342">GTP-binding</keyword>
<keyword id="KW-0460">Magnesium</keyword>
<keyword id="KW-0479">Metal-binding</keyword>
<keyword id="KW-0547">Nucleotide-binding</keyword>
<keyword id="KW-0717">Septation</keyword>